<proteinExistence type="inferred from homology"/>
<dbReference type="EMBL" id="CP001358">
    <property type="protein sequence ID" value="ACL50196.1"/>
    <property type="molecule type" value="Genomic_DNA"/>
</dbReference>
<dbReference type="SMR" id="B8J4R6"/>
<dbReference type="STRING" id="525146.Ddes_2301"/>
<dbReference type="KEGG" id="dds:Ddes_2301"/>
<dbReference type="eggNOG" id="COG0254">
    <property type="taxonomic scope" value="Bacteria"/>
</dbReference>
<dbReference type="HOGENOM" id="CLU_114306_4_0_7"/>
<dbReference type="GO" id="GO:1990904">
    <property type="term" value="C:ribonucleoprotein complex"/>
    <property type="evidence" value="ECO:0007669"/>
    <property type="project" value="UniProtKB-KW"/>
</dbReference>
<dbReference type="GO" id="GO:0005840">
    <property type="term" value="C:ribosome"/>
    <property type="evidence" value="ECO:0007669"/>
    <property type="project" value="UniProtKB-KW"/>
</dbReference>
<dbReference type="GO" id="GO:0046872">
    <property type="term" value="F:metal ion binding"/>
    <property type="evidence" value="ECO:0007669"/>
    <property type="project" value="UniProtKB-KW"/>
</dbReference>
<dbReference type="GO" id="GO:0019843">
    <property type="term" value="F:rRNA binding"/>
    <property type="evidence" value="ECO:0007669"/>
    <property type="project" value="UniProtKB-KW"/>
</dbReference>
<dbReference type="GO" id="GO:0003735">
    <property type="term" value="F:structural constituent of ribosome"/>
    <property type="evidence" value="ECO:0007669"/>
    <property type="project" value="InterPro"/>
</dbReference>
<dbReference type="GO" id="GO:0006412">
    <property type="term" value="P:translation"/>
    <property type="evidence" value="ECO:0007669"/>
    <property type="project" value="UniProtKB-UniRule"/>
</dbReference>
<dbReference type="Gene3D" id="4.10.830.30">
    <property type="entry name" value="Ribosomal protein L31"/>
    <property type="match status" value="1"/>
</dbReference>
<dbReference type="HAMAP" id="MF_00501">
    <property type="entry name" value="Ribosomal_bL31_1"/>
    <property type="match status" value="1"/>
</dbReference>
<dbReference type="InterPro" id="IPR034704">
    <property type="entry name" value="Ribosomal_bL28/bL31-like_sf"/>
</dbReference>
<dbReference type="InterPro" id="IPR002150">
    <property type="entry name" value="Ribosomal_bL31"/>
</dbReference>
<dbReference type="InterPro" id="IPR027491">
    <property type="entry name" value="Ribosomal_bL31_A"/>
</dbReference>
<dbReference type="InterPro" id="IPR042105">
    <property type="entry name" value="Ribosomal_bL31_sf"/>
</dbReference>
<dbReference type="NCBIfam" id="TIGR00105">
    <property type="entry name" value="L31"/>
    <property type="match status" value="1"/>
</dbReference>
<dbReference type="NCBIfam" id="NF000612">
    <property type="entry name" value="PRK00019.1"/>
    <property type="match status" value="1"/>
</dbReference>
<dbReference type="NCBIfam" id="NF001809">
    <property type="entry name" value="PRK00528.1"/>
    <property type="match status" value="1"/>
</dbReference>
<dbReference type="PANTHER" id="PTHR33280">
    <property type="entry name" value="50S RIBOSOMAL PROTEIN L31, CHLOROPLASTIC"/>
    <property type="match status" value="1"/>
</dbReference>
<dbReference type="PANTHER" id="PTHR33280:SF6">
    <property type="entry name" value="LARGE RIBOSOMAL SUBUNIT PROTEIN BL31A"/>
    <property type="match status" value="1"/>
</dbReference>
<dbReference type="Pfam" id="PF01197">
    <property type="entry name" value="Ribosomal_L31"/>
    <property type="match status" value="1"/>
</dbReference>
<dbReference type="PRINTS" id="PR01249">
    <property type="entry name" value="RIBOSOMALL31"/>
</dbReference>
<dbReference type="SUPFAM" id="SSF143800">
    <property type="entry name" value="L28p-like"/>
    <property type="match status" value="1"/>
</dbReference>
<dbReference type="PROSITE" id="PS01143">
    <property type="entry name" value="RIBOSOMAL_L31"/>
    <property type="match status" value="1"/>
</dbReference>
<evidence type="ECO:0000255" key="1">
    <source>
        <dbReference type="HAMAP-Rule" id="MF_00501"/>
    </source>
</evidence>
<evidence type="ECO:0000305" key="2"/>
<keyword id="KW-0479">Metal-binding</keyword>
<keyword id="KW-0687">Ribonucleoprotein</keyword>
<keyword id="KW-0689">Ribosomal protein</keyword>
<keyword id="KW-0694">RNA-binding</keyword>
<keyword id="KW-0699">rRNA-binding</keyword>
<keyword id="KW-0862">Zinc</keyword>
<name>RL31_DESDA</name>
<comment type="function">
    <text evidence="1">Binds the 23S rRNA.</text>
</comment>
<comment type="cofactor">
    <cofactor evidence="1">
        <name>Zn(2+)</name>
        <dbReference type="ChEBI" id="CHEBI:29105"/>
    </cofactor>
    <text evidence="1">Binds 1 zinc ion per subunit.</text>
</comment>
<comment type="subunit">
    <text evidence="1">Part of the 50S ribosomal subunit.</text>
</comment>
<comment type="similarity">
    <text evidence="1">Belongs to the bacterial ribosomal protein bL31 family. Type A subfamily.</text>
</comment>
<reference key="1">
    <citation type="submission" date="2009-01" db="EMBL/GenBank/DDBJ databases">
        <title>Complete sequence of Desulfovibrio desulfuricans subsp. desulfuricans str. ATCC 27774.</title>
        <authorList>
            <consortium name="US DOE Joint Genome Institute"/>
            <person name="Lucas S."/>
            <person name="Copeland A."/>
            <person name="Lapidus A."/>
            <person name="Glavina del Rio T."/>
            <person name="Tice H."/>
            <person name="Bruce D."/>
            <person name="Goodwin L."/>
            <person name="Pitluck S."/>
            <person name="Sims D."/>
            <person name="Lu M."/>
            <person name="Kiss H."/>
            <person name="Meineke L."/>
            <person name="Brettin T."/>
            <person name="Detter J.C."/>
            <person name="Han C."/>
            <person name="Larimer F."/>
            <person name="Land M."/>
            <person name="Hauser L."/>
            <person name="Kyrpides N."/>
            <person name="Ovchinnikova G."/>
            <person name="Hazen T.C."/>
        </authorList>
    </citation>
    <scope>NUCLEOTIDE SEQUENCE [LARGE SCALE GENOMIC DNA]</scope>
    <source>
        <strain>ATCC 27774 / DSM 6949 / MB</strain>
    </source>
</reference>
<feature type="chain" id="PRO_1000176958" description="Large ribosomal subunit protein bL31">
    <location>
        <begin position="1"/>
        <end position="70"/>
    </location>
</feature>
<feature type="binding site" evidence="1">
    <location>
        <position position="16"/>
    </location>
    <ligand>
        <name>Zn(2+)</name>
        <dbReference type="ChEBI" id="CHEBI:29105"/>
    </ligand>
</feature>
<feature type="binding site" evidence="1">
    <location>
        <position position="18"/>
    </location>
    <ligand>
        <name>Zn(2+)</name>
        <dbReference type="ChEBI" id="CHEBI:29105"/>
    </ligand>
</feature>
<feature type="binding site" evidence="1">
    <location>
        <position position="37"/>
    </location>
    <ligand>
        <name>Zn(2+)</name>
        <dbReference type="ChEBI" id="CHEBI:29105"/>
    </ligand>
</feature>
<feature type="binding site" evidence="1">
    <location>
        <position position="40"/>
    </location>
    <ligand>
        <name>Zn(2+)</name>
        <dbReference type="ChEBI" id="CHEBI:29105"/>
    </ligand>
</feature>
<gene>
    <name evidence="1" type="primary">rpmE</name>
    <name type="ordered locus">Ddes_2301</name>
</gene>
<accession>B8J4R6</accession>
<sequence>MKKDIHPKVFNATITCACGNEEKVLSTKGEQVNVEVCSACHPFFTGKQRFLDTAGRIDRFRKKYAKFEQK</sequence>
<organism>
    <name type="scientific">Desulfovibrio desulfuricans (strain ATCC 27774 / DSM 6949 / MB)</name>
    <dbReference type="NCBI Taxonomy" id="525146"/>
    <lineage>
        <taxon>Bacteria</taxon>
        <taxon>Pseudomonadati</taxon>
        <taxon>Thermodesulfobacteriota</taxon>
        <taxon>Desulfovibrionia</taxon>
        <taxon>Desulfovibrionales</taxon>
        <taxon>Desulfovibrionaceae</taxon>
        <taxon>Desulfovibrio</taxon>
    </lineage>
</organism>
<protein>
    <recommendedName>
        <fullName evidence="1">Large ribosomal subunit protein bL31</fullName>
    </recommendedName>
    <alternativeName>
        <fullName evidence="2">50S ribosomal protein L31</fullName>
    </alternativeName>
</protein>